<proteinExistence type="inferred from homology"/>
<organism>
    <name type="scientific">Listeria monocytogenes serovar 1/2a (strain ATCC BAA-679 / EGD-e)</name>
    <dbReference type="NCBI Taxonomy" id="169963"/>
    <lineage>
        <taxon>Bacteria</taxon>
        <taxon>Bacillati</taxon>
        <taxon>Bacillota</taxon>
        <taxon>Bacilli</taxon>
        <taxon>Bacillales</taxon>
        <taxon>Listeriaceae</taxon>
        <taxon>Listeria</taxon>
    </lineage>
</organism>
<name>PLSY_LISMO</name>
<reference key="1">
    <citation type="journal article" date="2002" name="J. Antimicrob. Chemother.">
        <title>Molecular characterization of the genes encoding DNA gyrase and topoisomerase IV of Listeria monocytogenes.</title>
        <authorList>
            <person name="Lampidis R."/>
            <person name="Kostrewa D."/>
            <person name="Hof H."/>
        </authorList>
    </citation>
    <scope>NUCLEOTIDE SEQUENCE [GENOMIC DNA]</scope>
    <source>
        <strain>EGD</strain>
    </source>
</reference>
<reference key="2">
    <citation type="journal article" date="2001" name="Science">
        <title>Comparative genomics of Listeria species.</title>
        <authorList>
            <person name="Glaser P."/>
            <person name="Frangeul L."/>
            <person name="Buchrieser C."/>
            <person name="Rusniok C."/>
            <person name="Amend A."/>
            <person name="Baquero F."/>
            <person name="Berche P."/>
            <person name="Bloecker H."/>
            <person name="Brandt P."/>
            <person name="Chakraborty T."/>
            <person name="Charbit A."/>
            <person name="Chetouani F."/>
            <person name="Couve E."/>
            <person name="de Daruvar A."/>
            <person name="Dehoux P."/>
            <person name="Domann E."/>
            <person name="Dominguez-Bernal G."/>
            <person name="Duchaud E."/>
            <person name="Durant L."/>
            <person name="Dussurget O."/>
            <person name="Entian K.-D."/>
            <person name="Fsihi H."/>
            <person name="Garcia-del Portillo F."/>
            <person name="Garrido P."/>
            <person name="Gautier L."/>
            <person name="Goebel W."/>
            <person name="Gomez-Lopez N."/>
            <person name="Hain T."/>
            <person name="Hauf J."/>
            <person name="Jackson D."/>
            <person name="Jones L.-M."/>
            <person name="Kaerst U."/>
            <person name="Kreft J."/>
            <person name="Kuhn M."/>
            <person name="Kunst F."/>
            <person name="Kurapkat G."/>
            <person name="Madueno E."/>
            <person name="Maitournam A."/>
            <person name="Mata Vicente J."/>
            <person name="Ng E."/>
            <person name="Nedjari H."/>
            <person name="Nordsiek G."/>
            <person name="Novella S."/>
            <person name="de Pablos B."/>
            <person name="Perez-Diaz J.-C."/>
            <person name="Purcell R."/>
            <person name="Remmel B."/>
            <person name="Rose M."/>
            <person name="Schlueter T."/>
            <person name="Simoes N."/>
            <person name="Tierrez A."/>
            <person name="Vazquez-Boland J.-A."/>
            <person name="Voss H."/>
            <person name="Wehland J."/>
            <person name="Cossart P."/>
        </authorList>
    </citation>
    <scope>NUCLEOTIDE SEQUENCE [LARGE SCALE GENOMIC DNA]</scope>
    <source>
        <strain>ATCC BAA-679 / EGD-e</strain>
    </source>
</reference>
<keyword id="KW-1003">Cell membrane</keyword>
<keyword id="KW-0444">Lipid biosynthesis</keyword>
<keyword id="KW-0443">Lipid metabolism</keyword>
<keyword id="KW-0472">Membrane</keyword>
<keyword id="KW-0594">Phospholipid biosynthesis</keyword>
<keyword id="KW-1208">Phospholipid metabolism</keyword>
<keyword id="KW-1185">Reference proteome</keyword>
<keyword id="KW-0808">Transferase</keyword>
<keyword id="KW-0812">Transmembrane</keyword>
<keyword id="KW-1133">Transmembrane helix</keyword>
<gene>
    <name evidence="1" type="primary">plsY</name>
    <name type="ordered locus">lmo1284</name>
</gene>
<comment type="function">
    <text evidence="1">Catalyzes the transfer of an acyl group from acyl-phosphate (acyl-PO(4)) to glycerol-3-phosphate (G3P) to form lysophosphatidic acid (LPA). This enzyme utilizes acyl-phosphate as fatty acyl donor, but not acyl-CoA or acyl-ACP.</text>
</comment>
<comment type="catalytic activity">
    <reaction evidence="1">
        <text>an acyl phosphate + sn-glycerol 3-phosphate = a 1-acyl-sn-glycero-3-phosphate + phosphate</text>
        <dbReference type="Rhea" id="RHEA:34075"/>
        <dbReference type="ChEBI" id="CHEBI:43474"/>
        <dbReference type="ChEBI" id="CHEBI:57597"/>
        <dbReference type="ChEBI" id="CHEBI:57970"/>
        <dbReference type="ChEBI" id="CHEBI:59918"/>
        <dbReference type="EC" id="2.3.1.275"/>
    </reaction>
</comment>
<comment type="pathway">
    <text evidence="1">Lipid metabolism; phospholipid metabolism.</text>
</comment>
<comment type="subunit">
    <text evidence="1">Probably interacts with PlsX.</text>
</comment>
<comment type="subcellular location">
    <subcellularLocation>
        <location evidence="1">Cell membrane</location>
        <topology evidence="1">Multi-pass membrane protein</topology>
    </subcellularLocation>
</comment>
<comment type="similarity">
    <text evidence="1">Belongs to the PlsY family.</text>
</comment>
<protein>
    <recommendedName>
        <fullName evidence="1">Glycerol-3-phosphate acyltransferase</fullName>
    </recommendedName>
    <alternativeName>
        <fullName evidence="1">Acyl-PO4 G3P acyltransferase</fullName>
    </alternativeName>
    <alternativeName>
        <fullName evidence="1">Acyl-phosphate--glycerol-3-phosphate acyltransferase</fullName>
    </alternativeName>
    <alternativeName>
        <fullName evidence="1">G3P acyltransferase</fullName>
        <shortName evidence="1">GPAT</shortName>
        <ecNumber evidence="1">2.3.1.275</ecNumber>
    </alternativeName>
    <alternativeName>
        <fullName evidence="1">Lysophosphatidic acid synthase</fullName>
        <shortName evidence="1">LPA synthase</shortName>
    </alternativeName>
</protein>
<accession>Q8Y7J3</accession>
<accession>Q8KYA9</accession>
<feature type="chain" id="PRO_0000188396" description="Glycerol-3-phosphate acyltransferase">
    <location>
        <begin position="1"/>
        <end position="198"/>
    </location>
</feature>
<feature type="transmembrane region" description="Helical" evidence="1">
    <location>
        <begin position="5"/>
        <end position="25"/>
    </location>
</feature>
<feature type="transmembrane region" description="Helical" evidence="1">
    <location>
        <begin position="56"/>
        <end position="76"/>
    </location>
</feature>
<feature type="transmembrane region" description="Helical" evidence="1">
    <location>
        <begin position="84"/>
        <end position="104"/>
    </location>
</feature>
<feature type="transmembrane region" description="Helical" evidence="1">
    <location>
        <begin position="114"/>
        <end position="134"/>
    </location>
</feature>
<feature type="transmembrane region" description="Helical" evidence="1">
    <location>
        <begin position="158"/>
        <end position="178"/>
    </location>
</feature>
<feature type="sequence conflict" description="In Ref. 1; AAM48493." evidence="2" ref="1">
    <original>IFY</original>
    <variation>FST</variation>
    <location>
        <begin position="27"/>
        <end position="29"/>
    </location>
</feature>
<feature type="sequence conflict" description="In Ref. 1; AAM48493." evidence="2" ref="1">
    <original>N</original>
    <variation>I</variation>
    <location>
        <position position="45"/>
    </location>
</feature>
<feature type="sequence conflict" description="In Ref. 1; AAM48493." evidence="2" ref="1">
    <original>D</original>
    <variation>V</variation>
    <location>
        <position position="62"/>
    </location>
</feature>
<sequence length="198" mass="21599">MTINLILLSLLAYVIGSIPSGLWIGKIFYKKDIREFGSGNLGATNSFRVLGIKAGSIVTVMDILKGTVATLLPFFFQLNVDHHFWLLTGAFAIIGHSFPLFAGFRGGKAVATSAGVILAYAPLLFVAALVVFLVTLKLSKYVSLSSMIGALAALIISLFMGDWILIVLVACIALFVIWRHRANITRIRNGEEPKIKWM</sequence>
<evidence type="ECO:0000255" key="1">
    <source>
        <dbReference type="HAMAP-Rule" id="MF_01043"/>
    </source>
</evidence>
<evidence type="ECO:0000305" key="2"/>
<dbReference type="EC" id="2.3.1.275" evidence="1"/>
<dbReference type="EMBL" id="AF084044">
    <property type="protein sequence ID" value="AAM48493.1"/>
    <property type="molecule type" value="Genomic_DNA"/>
</dbReference>
<dbReference type="EMBL" id="AL591978">
    <property type="protein sequence ID" value="CAC99362.1"/>
    <property type="molecule type" value="Genomic_DNA"/>
</dbReference>
<dbReference type="PIR" id="AD1235">
    <property type="entry name" value="AD1235"/>
</dbReference>
<dbReference type="RefSeq" id="NP_464809.1">
    <property type="nucleotide sequence ID" value="NC_003210.1"/>
</dbReference>
<dbReference type="RefSeq" id="WP_003724132.1">
    <property type="nucleotide sequence ID" value="NZ_CP149495.1"/>
</dbReference>
<dbReference type="SMR" id="Q8Y7J3"/>
<dbReference type="STRING" id="169963.gene:17593941"/>
<dbReference type="PaxDb" id="169963-lmo1284"/>
<dbReference type="EnsemblBacteria" id="CAC99362">
    <property type="protein sequence ID" value="CAC99362"/>
    <property type="gene ID" value="CAC99362"/>
</dbReference>
<dbReference type="GeneID" id="986559"/>
<dbReference type="KEGG" id="lmo:lmo1284"/>
<dbReference type="PATRIC" id="fig|169963.11.peg.1319"/>
<dbReference type="eggNOG" id="COG0344">
    <property type="taxonomic scope" value="Bacteria"/>
</dbReference>
<dbReference type="HOGENOM" id="CLU_081254_4_0_9"/>
<dbReference type="OrthoDB" id="9777124at2"/>
<dbReference type="PhylomeDB" id="Q8Y7J3"/>
<dbReference type="BioCyc" id="LMON169963:LMO1284-MONOMER"/>
<dbReference type="UniPathway" id="UPA00085"/>
<dbReference type="Proteomes" id="UP000000817">
    <property type="component" value="Chromosome"/>
</dbReference>
<dbReference type="GO" id="GO:0005886">
    <property type="term" value="C:plasma membrane"/>
    <property type="evidence" value="ECO:0000318"/>
    <property type="project" value="GO_Central"/>
</dbReference>
<dbReference type="GO" id="GO:0043772">
    <property type="term" value="F:acyl-phosphate glycerol-3-phosphate acyltransferase activity"/>
    <property type="evidence" value="ECO:0007669"/>
    <property type="project" value="UniProtKB-UniRule"/>
</dbReference>
<dbReference type="GO" id="GO:0008654">
    <property type="term" value="P:phospholipid biosynthetic process"/>
    <property type="evidence" value="ECO:0007669"/>
    <property type="project" value="UniProtKB-UniRule"/>
</dbReference>
<dbReference type="HAMAP" id="MF_01043">
    <property type="entry name" value="PlsY"/>
    <property type="match status" value="1"/>
</dbReference>
<dbReference type="InterPro" id="IPR003811">
    <property type="entry name" value="G3P_acylTferase_PlsY"/>
</dbReference>
<dbReference type="NCBIfam" id="TIGR00023">
    <property type="entry name" value="glycerol-3-phosphate 1-O-acyltransferase PlsY"/>
    <property type="match status" value="1"/>
</dbReference>
<dbReference type="PANTHER" id="PTHR30309:SF0">
    <property type="entry name" value="GLYCEROL-3-PHOSPHATE ACYLTRANSFERASE-RELATED"/>
    <property type="match status" value="1"/>
</dbReference>
<dbReference type="PANTHER" id="PTHR30309">
    <property type="entry name" value="INNER MEMBRANE PROTEIN YGIH"/>
    <property type="match status" value="1"/>
</dbReference>
<dbReference type="Pfam" id="PF02660">
    <property type="entry name" value="G3P_acyltransf"/>
    <property type="match status" value="1"/>
</dbReference>
<dbReference type="SMART" id="SM01207">
    <property type="entry name" value="G3P_acyltransf"/>
    <property type="match status" value="1"/>
</dbReference>